<keyword id="KW-0687">Ribonucleoprotein</keyword>
<keyword id="KW-0689">Ribosomal protein</keyword>
<keyword id="KW-0694">RNA-binding</keyword>
<keyword id="KW-0699">rRNA-binding</keyword>
<dbReference type="EMBL" id="CP000908">
    <property type="protein sequence ID" value="ABY30566.1"/>
    <property type="molecule type" value="Genomic_DNA"/>
</dbReference>
<dbReference type="RefSeq" id="WP_003597108.1">
    <property type="nucleotide sequence ID" value="NC_010172.1"/>
</dbReference>
<dbReference type="SMR" id="A9W4R0"/>
<dbReference type="GeneID" id="72989859"/>
<dbReference type="KEGG" id="mex:Mext_2171"/>
<dbReference type="eggNOG" id="COG0186">
    <property type="taxonomic scope" value="Bacteria"/>
</dbReference>
<dbReference type="HOGENOM" id="CLU_073626_1_1_5"/>
<dbReference type="BioCyc" id="MEXT419610:MEXT_RS10960-MONOMER"/>
<dbReference type="GO" id="GO:0022627">
    <property type="term" value="C:cytosolic small ribosomal subunit"/>
    <property type="evidence" value="ECO:0007669"/>
    <property type="project" value="TreeGrafter"/>
</dbReference>
<dbReference type="GO" id="GO:0019843">
    <property type="term" value="F:rRNA binding"/>
    <property type="evidence" value="ECO:0007669"/>
    <property type="project" value="UniProtKB-UniRule"/>
</dbReference>
<dbReference type="GO" id="GO:0003735">
    <property type="term" value="F:structural constituent of ribosome"/>
    <property type="evidence" value="ECO:0007669"/>
    <property type="project" value="InterPro"/>
</dbReference>
<dbReference type="GO" id="GO:0006412">
    <property type="term" value="P:translation"/>
    <property type="evidence" value="ECO:0007669"/>
    <property type="project" value="UniProtKB-UniRule"/>
</dbReference>
<dbReference type="CDD" id="cd00364">
    <property type="entry name" value="Ribosomal_uS17"/>
    <property type="match status" value="1"/>
</dbReference>
<dbReference type="Gene3D" id="2.40.50.140">
    <property type="entry name" value="Nucleic acid-binding proteins"/>
    <property type="match status" value="1"/>
</dbReference>
<dbReference type="HAMAP" id="MF_01345_B">
    <property type="entry name" value="Ribosomal_uS17_B"/>
    <property type="match status" value="1"/>
</dbReference>
<dbReference type="InterPro" id="IPR012340">
    <property type="entry name" value="NA-bd_OB-fold"/>
</dbReference>
<dbReference type="InterPro" id="IPR000266">
    <property type="entry name" value="Ribosomal_uS17"/>
</dbReference>
<dbReference type="InterPro" id="IPR019984">
    <property type="entry name" value="Ribosomal_uS17_bact/chlr"/>
</dbReference>
<dbReference type="NCBIfam" id="NF004123">
    <property type="entry name" value="PRK05610.1"/>
    <property type="match status" value="1"/>
</dbReference>
<dbReference type="NCBIfam" id="TIGR03635">
    <property type="entry name" value="uS17_bact"/>
    <property type="match status" value="1"/>
</dbReference>
<dbReference type="PANTHER" id="PTHR10744">
    <property type="entry name" value="40S RIBOSOMAL PROTEIN S11 FAMILY MEMBER"/>
    <property type="match status" value="1"/>
</dbReference>
<dbReference type="PANTHER" id="PTHR10744:SF1">
    <property type="entry name" value="SMALL RIBOSOMAL SUBUNIT PROTEIN US17M"/>
    <property type="match status" value="1"/>
</dbReference>
<dbReference type="Pfam" id="PF00366">
    <property type="entry name" value="Ribosomal_S17"/>
    <property type="match status" value="1"/>
</dbReference>
<dbReference type="PRINTS" id="PR00973">
    <property type="entry name" value="RIBOSOMALS17"/>
</dbReference>
<dbReference type="SUPFAM" id="SSF50249">
    <property type="entry name" value="Nucleic acid-binding proteins"/>
    <property type="match status" value="1"/>
</dbReference>
<reference key="1">
    <citation type="submission" date="2007-12" db="EMBL/GenBank/DDBJ databases">
        <title>Complete sequence of Methylobacterium extorquens PA1.</title>
        <authorList>
            <consortium name="US DOE Joint Genome Institute"/>
            <person name="Copeland A."/>
            <person name="Lucas S."/>
            <person name="Lapidus A."/>
            <person name="Barry K."/>
            <person name="Glavina del Rio T."/>
            <person name="Dalin E."/>
            <person name="Tice H."/>
            <person name="Pitluck S."/>
            <person name="Saunders E."/>
            <person name="Brettin T."/>
            <person name="Bruce D."/>
            <person name="Detter J.C."/>
            <person name="Han C."/>
            <person name="Schmutz J."/>
            <person name="Larimer F."/>
            <person name="Land M."/>
            <person name="Hauser L."/>
            <person name="Kyrpides N."/>
            <person name="Kim E."/>
            <person name="Marx C."/>
            <person name="Richardson P."/>
        </authorList>
    </citation>
    <scope>NUCLEOTIDE SEQUENCE [LARGE SCALE GENOMIC DNA]</scope>
    <source>
        <strain>PA1</strain>
    </source>
</reference>
<organism>
    <name type="scientific">Methylorubrum extorquens (strain PA1)</name>
    <name type="common">Methylobacterium extorquens</name>
    <dbReference type="NCBI Taxonomy" id="419610"/>
    <lineage>
        <taxon>Bacteria</taxon>
        <taxon>Pseudomonadati</taxon>
        <taxon>Pseudomonadota</taxon>
        <taxon>Alphaproteobacteria</taxon>
        <taxon>Hyphomicrobiales</taxon>
        <taxon>Methylobacteriaceae</taxon>
        <taxon>Methylorubrum</taxon>
    </lineage>
</organism>
<accession>A9W4R0</accession>
<protein>
    <recommendedName>
        <fullName evidence="1">Small ribosomal subunit protein uS17</fullName>
    </recommendedName>
    <alternativeName>
        <fullName evidence="2">30S ribosomal protein S17</fullName>
    </alternativeName>
</protein>
<gene>
    <name evidence="1" type="primary">rpsQ</name>
    <name type="ordered locus">Mext_2171</name>
</gene>
<evidence type="ECO:0000255" key="1">
    <source>
        <dbReference type="HAMAP-Rule" id="MF_01345"/>
    </source>
</evidence>
<evidence type="ECO:0000305" key="2"/>
<name>RS17_METEP</name>
<comment type="function">
    <text evidence="1">One of the primary rRNA binding proteins, it binds specifically to the 5'-end of 16S ribosomal RNA.</text>
</comment>
<comment type="subunit">
    <text evidence="1">Part of the 30S ribosomal subunit.</text>
</comment>
<comment type="similarity">
    <text evidence="1">Belongs to the universal ribosomal protein uS17 family.</text>
</comment>
<feature type="chain" id="PRO_1000143269" description="Small ribosomal subunit protein uS17">
    <location>
        <begin position="1"/>
        <end position="88"/>
    </location>
</feature>
<sequence length="88" mass="9822">MPKRVLQGVVVSDKTDKTIVVKVERRFTHPVMKKTVRRSKNYHAHDEANAAKIGQTVFIEESRPYSKTKTWKLVEDQAAAAEAAGTAA</sequence>
<proteinExistence type="inferred from homology"/>